<accession>A5ABH4</accession>
<dbReference type="EC" id="4.2.2.23"/>
<dbReference type="EMBL" id="AM270218">
    <property type="protein sequence ID" value="CAK48272.1"/>
    <property type="molecule type" value="Genomic_DNA"/>
</dbReference>
<dbReference type="RefSeq" id="XP_001394043.2">
    <property type="nucleotide sequence ID" value="XM_001394006.2"/>
</dbReference>
<dbReference type="SMR" id="A5ABH4"/>
<dbReference type="CAZy" id="PL4">
    <property type="family name" value="Polysaccharide Lyase Family 4"/>
</dbReference>
<dbReference type="GlyCosmos" id="A5ABH4">
    <property type="glycosylation" value="10 sites, No reported glycans"/>
</dbReference>
<dbReference type="EnsemblFungi" id="CAK48272">
    <property type="protein sequence ID" value="CAK48272"/>
    <property type="gene ID" value="An11g00390"/>
</dbReference>
<dbReference type="GeneID" id="4984257"/>
<dbReference type="KEGG" id="ang:An11g00390"/>
<dbReference type="VEuPathDB" id="FungiDB:An11g00390"/>
<dbReference type="HOGENOM" id="CLU_016624_0_0_1"/>
<dbReference type="Proteomes" id="UP000006706">
    <property type="component" value="Chromosome 7R"/>
</dbReference>
<dbReference type="GO" id="GO:0005576">
    <property type="term" value="C:extracellular region"/>
    <property type="evidence" value="ECO:0007669"/>
    <property type="project" value="UniProtKB-SubCell"/>
</dbReference>
<dbReference type="GO" id="GO:0030246">
    <property type="term" value="F:carbohydrate binding"/>
    <property type="evidence" value="ECO:0007669"/>
    <property type="project" value="InterPro"/>
</dbReference>
<dbReference type="GO" id="GO:0102210">
    <property type="term" value="F:rhamnogalacturonan endolyase activity"/>
    <property type="evidence" value="ECO:0007669"/>
    <property type="project" value="UniProtKB-EC"/>
</dbReference>
<dbReference type="GO" id="GO:0071555">
    <property type="term" value="P:cell wall organization"/>
    <property type="evidence" value="ECO:0007669"/>
    <property type="project" value="UniProtKB-KW"/>
</dbReference>
<dbReference type="GO" id="GO:0000272">
    <property type="term" value="P:polysaccharide catabolic process"/>
    <property type="evidence" value="ECO:0007669"/>
    <property type="project" value="UniProtKB-KW"/>
</dbReference>
<dbReference type="CDD" id="cd10316">
    <property type="entry name" value="RGL4_M"/>
    <property type="match status" value="1"/>
</dbReference>
<dbReference type="CDD" id="cd10320">
    <property type="entry name" value="RGL4_N"/>
    <property type="match status" value="1"/>
</dbReference>
<dbReference type="Gene3D" id="2.70.98.10">
    <property type="match status" value="1"/>
</dbReference>
<dbReference type="Gene3D" id="2.60.40.1120">
    <property type="entry name" value="Carboxypeptidase-like, regulatory domain"/>
    <property type="match status" value="1"/>
</dbReference>
<dbReference type="Gene3D" id="2.60.120.260">
    <property type="entry name" value="Galactose-binding domain-like"/>
    <property type="match status" value="1"/>
</dbReference>
<dbReference type="InterPro" id="IPR013784">
    <property type="entry name" value="Carb-bd-like_fold"/>
</dbReference>
<dbReference type="InterPro" id="IPR011013">
    <property type="entry name" value="Gal_mutarotase_sf_dom"/>
</dbReference>
<dbReference type="InterPro" id="IPR008979">
    <property type="entry name" value="Galactose-bd-like_sf"/>
</dbReference>
<dbReference type="InterPro" id="IPR014718">
    <property type="entry name" value="GH-type_carb-bd"/>
</dbReference>
<dbReference type="InterPro" id="IPR051850">
    <property type="entry name" value="Polysacch_Lyase_4"/>
</dbReference>
<dbReference type="InterPro" id="IPR029413">
    <property type="entry name" value="RG-lyase_II"/>
</dbReference>
<dbReference type="InterPro" id="IPR029411">
    <property type="entry name" value="RG-lyase_III"/>
</dbReference>
<dbReference type="PANTHER" id="PTHR32018:SF9">
    <property type="entry name" value="RHAMNOGALACTURONATE LYASE B"/>
    <property type="match status" value="1"/>
</dbReference>
<dbReference type="PANTHER" id="PTHR32018">
    <property type="entry name" value="RHAMNOGALACTURONATE LYASE FAMILY PROTEIN"/>
    <property type="match status" value="1"/>
</dbReference>
<dbReference type="Pfam" id="PF14683">
    <property type="entry name" value="CBM-like"/>
    <property type="match status" value="1"/>
</dbReference>
<dbReference type="Pfam" id="PF14686">
    <property type="entry name" value="fn3_3"/>
    <property type="match status" value="1"/>
</dbReference>
<dbReference type="SUPFAM" id="SSF74650">
    <property type="entry name" value="Galactose mutarotase-like"/>
    <property type="match status" value="1"/>
</dbReference>
<dbReference type="SUPFAM" id="SSF49785">
    <property type="entry name" value="Galactose-binding domain-like"/>
    <property type="match status" value="1"/>
</dbReference>
<dbReference type="SUPFAM" id="SSF49452">
    <property type="entry name" value="Starch-binding domain-like"/>
    <property type="match status" value="1"/>
</dbReference>
<sequence>MRLLHPLIPASLLLTLTSATLHTSQTNTTITLTNNRLTANFSKSQGRITDLYLDNQDLLGPQSGDTGVGPYLDCYCIPSGFYTPGSTSPTLQLFTGTDKSGTSYAGVLMDETYPPTGQHFQQYWFLRDGETGLHTFSRLAYYNETTPYLRNLQEFRTLFRPNTELWTHLSSSEVQTAPLPSKKAVEEEVVVQDATWTFNNTPTDEYYVQFADYFTKYTFSNAWRDNSVHGMYADGSTSNGSTFGAWLVMNTKDTYYGGPLHSDLTVDGIVYNYLVSNHHGEGTPNITYGFDRTFGPQYYHFNGGKGSTASLQELKSDAETLADPSWNVDFYDSIAKHVVGYTPSSQRGSVQGKIKLPKGATRPIAVLTVDGQYFQDNSVNSSSYQYWAEIDDSGHFSVDHVKEGPYRLTVYADGIFGDFVRDGVQVKAGKKTTIQETWEAESAGTEIWRLGTPDKSSGEFRHGVARDPTHPLHPPEYLIYWGAYDWQSDFPDGINYTIGTSDPATDLNTVHWSVFGPTPNDPRVEYDTTHDWTINFPLSEDDLAERSKATLTIQLAGAKAASGNTDVYNASEPYTNLALESYINDQAEPLTLLIGFNQSSSCIVRSAVSCYQVRSRMEFPADWLKVGNNVLTLHLPYNATDTETAILPATVTGRLILPPQPIYGQTPVILSVIGSEKLEPLPAASILIFEIIRHQSEPLWSVPRSA</sequence>
<reference key="1">
    <citation type="journal article" date="2007" name="Nat. Biotechnol.">
        <title>Genome sequencing and analysis of the versatile cell factory Aspergillus niger CBS 513.88.</title>
        <authorList>
            <person name="Pel H.J."/>
            <person name="de Winde J.H."/>
            <person name="Archer D.B."/>
            <person name="Dyer P.S."/>
            <person name="Hofmann G."/>
            <person name="Schaap P.J."/>
            <person name="Turner G."/>
            <person name="de Vries R.P."/>
            <person name="Albang R."/>
            <person name="Albermann K."/>
            <person name="Andersen M.R."/>
            <person name="Bendtsen J.D."/>
            <person name="Benen J.A.E."/>
            <person name="van den Berg M."/>
            <person name="Breestraat S."/>
            <person name="Caddick M.X."/>
            <person name="Contreras R."/>
            <person name="Cornell M."/>
            <person name="Coutinho P.M."/>
            <person name="Danchin E.G.J."/>
            <person name="Debets A.J.M."/>
            <person name="Dekker P."/>
            <person name="van Dijck P.W.M."/>
            <person name="van Dijk A."/>
            <person name="Dijkhuizen L."/>
            <person name="Driessen A.J.M."/>
            <person name="d'Enfert C."/>
            <person name="Geysens S."/>
            <person name="Goosen C."/>
            <person name="Groot G.S.P."/>
            <person name="de Groot P.W.J."/>
            <person name="Guillemette T."/>
            <person name="Henrissat B."/>
            <person name="Herweijer M."/>
            <person name="van den Hombergh J.P.T.W."/>
            <person name="van den Hondel C.A.M.J.J."/>
            <person name="van der Heijden R.T.J.M."/>
            <person name="van der Kaaij R.M."/>
            <person name="Klis F.M."/>
            <person name="Kools H.J."/>
            <person name="Kubicek C.P."/>
            <person name="van Kuyk P.A."/>
            <person name="Lauber J."/>
            <person name="Lu X."/>
            <person name="van der Maarel M.J.E.C."/>
            <person name="Meulenberg R."/>
            <person name="Menke H."/>
            <person name="Mortimer M.A."/>
            <person name="Nielsen J."/>
            <person name="Oliver S.G."/>
            <person name="Olsthoorn M."/>
            <person name="Pal K."/>
            <person name="van Peij N.N.M.E."/>
            <person name="Ram A.F.J."/>
            <person name="Rinas U."/>
            <person name="Roubos J.A."/>
            <person name="Sagt C.M.J."/>
            <person name="Schmoll M."/>
            <person name="Sun J."/>
            <person name="Ussery D."/>
            <person name="Varga J."/>
            <person name="Vervecken W."/>
            <person name="van de Vondervoort P.J.J."/>
            <person name="Wedler H."/>
            <person name="Woesten H.A.B."/>
            <person name="Zeng A.-P."/>
            <person name="van Ooyen A.J.J."/>
            <person name="Visser J."/>
            <person name="Stam H."/>
        </authorList>
    </citation>
    <scope>NUCLEOTIDE SEQUENCE [LARGE SCALE GENOMIC DNA]</scope>
    <source>
        <strain>ATCC MYA-4892 / CBS 513.88 / FGSC A1513</strain>
    </source>
</reference>
<keyword id="KW-0119">Carbohydrate metabolism</keyword>
<keyword id="KW-0961">Cell wall biogenesis/degradation</keyword>
<keyword id="KW-0325">Glycoprotein</keyword>
<keyword id="KW-0456">Lyase</keyword>
<keyword id="KW-0624">Polysaccharide degradation</keyword>
<keyword id="KW-1185">Reference proteome</keyword>
<keyword id="KW-0964">Secreted</keyword>
<keyword id="KW-0732">Signal</keyword>
<comment type="function">
    <text evidence="1">Pectinolytic enzymes consist of four classes of enzymes: pectin lyase, polygalacturonase, pectin methylesterase and rhamnogalacturonase. Degrades the rhamnogalacturonan I (RG-I) backbone of pectin (By similarity).</text>
</comment>
<comment type="catalytic activity">
    <reaction>
        <text>Endotype eliminative cleavage of L-alpha-rhamnopyranosyl-(1-&gt;4)-alpha-D-galactopyranosyluronic acid bonds of rhamnogalacturonan I domains in ramified hairy regions of pectin leaving L-rhamnopyranose at the reducing end and 4-deoxy-4,5-unsaturated D-galactopyranosyluronic acid at the non-reducing end.</text>
        <dbReference type="EC" id="4.2.2.23"/>
    </reaction>
</comment>
<comment type="subcellular location">
    <subcellularLocation>
        <location evidence="1">Secreted</location>
    </subcellularLocation>
</comment>
<comment type="similarity">
    <text evidence="3">Belongs to the polysaccharide lyase 4 family.</text>
</comment>
<feature type="signal peptide" evidence="2">
    <location>
        <begin position="1"/>
        <end position="19"/>
    </location>
</feature>
<feature type="chain" id="PRO_5000242406" description="Probable rhamnogalacturonate lyase B">
    <location>
        <begin position="20"/>
        <end position="706"/>
    </location>
</feature>
<feature type="glycosylation site" description="N-linked (GlcNAc...) asparagine" evidence="2">
    <location>
        <position position="27"/>
    </location>
</feature>
<feature type="glycosylation site" description="N-linked (GlcNAc...) asparagine" evidence="2">
    <location>
        <position position="40"/>
    </location>
</feature>
<feature type="glycosylation site" description="N-linked (GlcNAc...) asparagine" evidence="2">
    <location>
        <position position="143"/>
    </location>
</feature>
<feature type="glycosylation site" description="N-linked (GlcNAc...) asparagine" evidence="2">
    <location>
        <position position="239"/>
    </location>
</feature>
<feature type="glycosylation site" description="N-linked (GlcNAc...) asparagine" evidence="2">
    <location>
        <position position="285"/>
    </location>
</feature>
<feature type="glycosylation site" description="N-linked (GlcNAc...) asparagine" evidence="2">
    <location>
        <position position="380"/>
    </location>
</feature>
<feature type="glycosylation site" description="N-linked (GlcNAc...) asparagine" evidence="2">
    <location>
        <position position="495"/>
    </location>
</feature>
<feature type="glycosylation site" description="N-linked (GlcNAc...) asparagine" evidence="2">
    <location>
        <position position="569"/>
    </location>
</feature>
<feature type="glycosylation site" description="N-linked (GlcNAc...) asparagine" evidence="2">
    <location>
        <position position="597"/>
    </location>
</feature>
<feature type="glycosylation site" description="N-linked (GlcNAc...) asparagine" evidence="2">
    <location>
        <position position="638"/>
    </location>
</feature>
<proteinExistence type="inferred from homology"/>
<name>RGLB_ASPNC</name>
<evidence type="ECO:0000250" key="1"/>
<evidence type="ECO:0000255" key="2"/>
<evidence type="ECO:0000305" key="3"/>
<organism>
    <name type="scientific">Aspergillus niger (strain ATCC MYA-4892 / CBS 513.88 / FGSC A1513)</name>
    <dbReference type="NCBI Taxonomy" id="425011"/>
    <lineage>
        <taxon>Eukaryota</taxon>
        <taxon>Fungi</taxon>
        <taxon>Dikarya</taxon>
        <taxon>Ascomycota</taxon>
        <taxon>Pezizomycotina</taxon>
        <taxon>Eurotiomycetes</taxon>
        <taxon>Eurotiomycetidae</taxon>
        <taxon>Eurotiales</taxon>
        <taxon>Aspergillaceae</taxon>
        <taxon>Aspergillus</taxon>
        <taxon>Aspergillus subgen. Circumdati</taxon>
    </lineage>
</organism>
<protein>
    <recommendedName>
        <fullName>Probable rhamnogalacturonate lyase B</fullName>
        <ecNumber>4.2.2.23</ecNumber>
    </recommendedName>
</protein>
<gene>
    <name type="primary">rglB</name>
    <name type="ORF">An11g00390</name>
</gene>